<protein>
    <recommendedName>
        <fullName evidence="1">D-alanyl carrier protein</fullName>
        <shortName evidence="1">DCP</shortName>
    </recommendedName>
    <alternativeName>
        <fullName evidence="1">D-alanine--poly(phosphoribitol) ligase subunit 2</fullName>
    </alternativeName>
</protein>
<evidence type="ECO:0000255" key="1">
    <source>
        <dbReference type="HAMAP-Rule" id="MF_00565"/>
    </source>
</evidence>
<organism>
    <name type="scientific">Listeria welshimeri serovar 6b (strain ATCC 35897 / DSM 20650 / CCUG 15529 / CIP 8149 / NCTC 11857 / SLCC 5334 / V8)</name>
    <dbReference type="NCBI Taxonomy" id="386043"/>
    <lineage>
        <taxon>Bacteria</taxon>
        <taxon>Bacillati</taxon>
        <taxon>Bacillota</taxon>
        <taxon>Bacilli</taxon>
        <taxon>Bacillales</taxon>
        <taxon>Listeriaceae</taxon>
        <taxon>Listeria</taxon>
    </lineage>
</organism>
<gene>
    <name evidence="1" type="primary">dltC</name>
    <name type="ordered locus">lwe0954</name>
</gene>
<sequence length="78" mass="9024">MAFRENVLEILEEITETEEVVQNTNIKLFDEGLLDSMATVQLLIEIEEKLDITVPVSEFDRDEWATPEMIITQLEALK</sequence>
<dbReference type="EMBL" id="AM263198">
    <property type="protein sequence ID" value="CAK20372.1"/>
    <property type="molecule type" value="Genomic_DNA"/>
</dbReference>
<dbReference type="RefSeq" id="WP_011701783.1">
    <property type="nucleotide sequence ID" value="NC_008555.1"/>
</dbReference>
<dbReference type="SMR" id="A0AH90"/>
<dbReference type="STRING" id="386043.lwe0954"/>
<dbReference type="GeneID" id="61188845"/>
<dbReference type="KEGG" id="lwe:lwe0954"/>
<dbReference type="eggNOG" id="COG0236">
    <property type="taxonomic scope" value="Bacteria"/>
</dbReference>
<dbReference type="HOGENOM" id="CLU_108696_19_0_9"/>
<dbReference type="OrthoDB" id="6462171at2"/>
<dbReference type="UniPathway" id="UPA00556"/>
<dbReference type="Proteomes" id="UP000000779">
    <property type="component" value="Chromosome"/>
</dbReference>
<dbReference type="GO" id="GO:0005737">
    <property type="term" value="C:cytoplasm"/>
    <property type="evidence" value="ECO:0007669"/>
    <property type="project" value="UniProtKB-SubCell"/>
</dbReference>
<dbReference type="GO" id="GO:0036370">
    <property type="term" value="F:D-alanyl carrier activity"/>
    <property type="evidence" value="ECO:0007669"/>
    <property type="project" value="UniProtKB-UniRule"/>
</dbReference>
<dbReference type="GO" id="GO:0071555">
    <property type="term" value="P:cell wall organization"/>
    <property type="evidence" value="ECO:0007669"/>
    <property type="project" value="UniProtKB-KW"/>
</dbReference>
<dbReference type="GO" id="GO:0070395">
    <property type="term" value="P:lipoteichoic acid biosynthetic process"/>
    <property type="evidence" value="ECO:0007669"/>
    <property type="project" value="UniProtKB-UniRule"/>
</dbReference>
<dbReference type="FunFam" id="1.10.1200.10:FF:000004">
    <property type="entry name" value="D-alanyl carrier protein"/>
    <property type="match status" value="1"/>
</dbReference>
<dbReference type="Gene3D" id="1.10.1200.10">
    <property type="entry name" value="ACP-like"/>
    <property type="match status" value="1"/>
</dbReference>
<dbReference type="HAMAP" id="MF_00565">
    <property type="entry name" value="DltC"/>
    <property type="match status" value="1"/>
</dbReference>
<dbReference type="InterPro" id="IPR036736">
    <property type="entry name" value="ACP-like_sf"/>
</dbReference>
<dbReference type="InterPro" id="IPR003230">
    <property type="entry name" value="DltC"/>
</dbReference>
<dbReference type="InterPro" id="IPR009081">
    <property type="entry name" value="PP-bd_ACP"/>
</dbReference>
<dbReference type="NCBIfam" id="TIGR01688">
    <property type="entry name" value="dltC"/>
    <property type="match status" value="1"/>
</dbReference>
<dbReference type="NCBIfam" id="NF003464">
    <property type="entry name" value="PRK05087.1"/>
    <property type="match status" value="1"/>
</dbReference>
<dbReference type="Pfam" id="PF00550">
    <property type="entry name" value="PP-binding"/>
    <property type="match status" value="1"/>
</dbReference>
<dbReference type="SUPFAM" id="SSF47336">
    <property type="entry name" value="ACP-like"/>
    <property type="match status" value="1"/>
</dbReference>
<dbReference type="PROSITE" id="PS50075">
    <property type="entry name" value="CARRIER"/>
    <property type="match status" value="1"/>
</dbReference>
<reference key="1">
    <citation type="journal article" date="2006" name="J. Bacteriol.">
        <title>Whole-genome sequence of Listeria welshimeri reveals common steps in genome reduction with Listeria innocua as compared to Listeria monocytogenes.</title>
        <authorList>
            <person name="Hain T."/>
            <person name="Steinweg C."/>
            <person name="Kuenne C.T."/>
            <person name="Billion A."/>
            <person name="Ghai R."/>
            <person name="Chatterjee S.S."/>
            <person name="Domann E."/>
            <person name="Kaerst U."/>
            <person name="Goesmann A."/>
            <person name="Bekel T."/>
            <person name="Bartels D."/>
            <person name="Kaiser O."/>
            <person name="Meyer F."/>
            <person name="Puehler A."/>
            <person name="Weisshaar B."/>
            <person name="Wehland J."/>
            <person name="Liang C."/>
            <person name="Dandekar T."/>
            <person name="Lampidis R."/>
            <person name="Kreft J."/>
            <person name="Goebel W."/>
            <person name="Chakraborty T."/>
        </authorList>
    </citation>
    <scope>NUCLEOTIDE SEQUENCE [LARGE SCALE GENOMIC DNA]</scope>
    <source>
        <strain>ATCC 35897 / DSM 20650 / CCUG 15529 / CIP 8149 / NCTC 11857 / SLCC 5334 / V8</strain>
    </source>
</reference>
<proteinExistence type="inferred from homology"/>
<accession>A0AH90</accession>
<name>DLTC_LISW6</name>
<keyword id="KW-0961">Cell wall biogenesis/degradation</keyword>
<keyword id="KW-0963">Cytoplasm</keyword>
<keyword id="KW-0596">Phosphopantetheine</keyword>
<keyword id="KW-0597">Phosphoprotein</keyword>
<feature type="chain" id="PRO_1000024922" description="D-alanyl carrier protein">
    <location>
        <begin position="1"/>
        <end position="78"/>
    </location>
</feature>
<feature type="domain" description="Carrier" evidence="1">
    <location>
        <begin position="1"/>
        <end position="78"/>
    </location>
</feature>
<feature type="modified residue" description="O-(pantetheine 4'-phosphoryl)serine" evidence="1">
    <location>
        <position position="36"/>
    </location>
</feature>
<comment type="function">
    <text evidence="1">Carrier protein involved in the D-alanylation of lipoteichoic acid (LTA). The loading of thioester-linked D-alanine onto DltC is catalyzed by D-alanine--D-alanyl carrier protein ligase DltA. The DltC-carried D-alanyl group is further transferred to cell membrane phosphatidylglycerol (PG) by forming an ester bond, probably catalyzed by DltD. D-alanylation of LTA plays an important role in modulating the properties of the cell wall in Gram-positive bacteria, influencing the net charge of the cell wall.</text>
</comment>
<comment type="pathway">
    <text evidence="1">Cell wall biogenesis; lipoteichoic acid biosynthesis.</text>
</comment>
<comment type="subcellular location">
    <subcellularLocation>
        <location evidence="1">Cytoplasm</location>
    </subcellularLocation>
</comment>
<comment type="PTM">
    <text evidence="1">4'-phosphopantetheine is transferred from CoA to a specific serine of apo-DCP.</text>
</comment>
<comment type="similarity">
    <text evidence="1">Belongs to the DltC family.</text>
</comment>